<dbReference type="EC" id="4.1.1.48" evidence="1"/>
<dbReference type="EMBL" id="AE009439">
    <property type="protein sequence ID" value="AAM02604.1"/>
    <property type="molecule type" value="Genomic_DNA"/>
</dbReference>
<dbReference type="SMR" id="Q8TVJ8"/>
<dbReference type="FunCoup" id="Q8TVJ8">
    <property type="interactions" value="107"/>
</dbReference>
<dbReference type="STRING" id="190192.MK1391"/>
<dbReference type="PaxDb" id="190192-MK1391"/>
<dbReference type="EnsemblBacteria" id="AAM02604">
    <property type="protein sequence ID" value="AAM02604"/>
    <property type="gene ID" value="MK1391"/>
</dbReference>
<dbReference type="KEGG" id="mka:MK1391"/>
<dbReference type="PATRIC" id="fig|190192.8.peg.1546"/>
<dbReference type="HOGENOM" id="CLU_034247_0_1_2"/>
<dbReference type="InParanoid" id="Q8TVJ8"/>
<dbReference type="UniPathway" id="UPA00035">
    <property type="reaction ID" value="UER00043"/>
</dbReference>
<dbReference type="Proteomes" id="UP000001826">
    <property type="component" value="Chromosome"/>
</dbReference>
<dbReference type="GO" id="GO:0004425">
    <property type="term" value="F:indole-3-glycerol-phosphate synthase activity"/>
    <property type="evidence" value="ECO:0007669"/>
    <property type="project" value="UniProtKB-UniRule"/>
</dbReference>
<dbReference type="GO" id="GO:0004640">
    <property type="term" value="F:phosphoribosylanthranilate isomerase activity"/>
    <property type="evidence" value="ECO:0007669"/>
    <property type="project" value="TreeGrafter"/>
</dbReference>
<dbReference type="GO" id="GO:0000162">
    <property type="term" value="P:L-tryptophan biosynthetic process"/>
    <property type="evidence" value="ECO:0007669"/>
    <property type="project" value="UniProtKB-UniRule"/>
</dbReference>
<dbReference type="CDD" id="cd00331">
    <property type="entry name" value="IGPS"/>
    <property type="match status" value="1"/>
</dbReference>
<dbReference type="Gene3D" id="3.20.20.70">
    <property type="entry name" value="Aldolase class I"/>
    <property type="match status" value="1"/>
</dbReference>
<dbReference type="HAMAP" id="MF_00134_A">
    <property type="entry name" value="IGPS_A"/>
    <property type="match status" value="1"/>
</dbReference>
<dbReference type="InterPro" id="IPR013785">
    <property type="entry name" value="Aldolase_TIM"/>
</dbReference>
<dbReference type="InterPro" id="IPR045186">
    <property type="entry name" value="Indole-3-glycerol_P_synth"/>
</dbReference>
<dbReference type="InterPro" id="IPR013798">
    <property type="entry name" value="Indole-3-glycerol_P_synth_dom"/>
</dbReference>
<dbReference type="InterPro" id="IPR001468">
    <property type="entry name" value="Indole-3-GlycerolPSynthase_CS"/>
</dbReference>
<dbReference type="InterPro" id="IPR011060">
    <property type="entry name" value="RibuloseP-bd_barrel"/>
</dbReference>
<dbReference type="PANTHER" id="PTHR22854:SF2">
    <property type="entry name" value="INDOLE-3-GLYCEROL-PHOSPHATE SYNTHASE"/>
    <property type="match status" value="1"/>
</dbReference>
<dbReference type="PANTHER" id="PTHR22854">
    <property type="entry name" value="TRYPTOPHAN BIOSYNTHESIS PROTEIN"/>
    <property type="match status" value="1"/>
</dbReference>
<dbReference type="Pfam" id="PF00218">
    <property type="entry name" value="IGPS"/>
    <property type="match status" value="1"/>
</dbReference>
<dbReference type="SUPFAM" id="SSF51366">
    <property type="entry name" value="Ribulose-phoshate binding barrel"/>
    <property type="match status" value="1"/>
</dbReference>
<dbReference type="PROSITE" id="PS00614">
    <property type="entry name" value="IGPS"/>
    <property type="match status" value="1"/>
</dbReference>
<reference key="1">
    <citation type="journal article" date="2002" name="Proc. Natl. Acad. Sci. U.S.A.">
        <title>The complete genome of hyperthermophile Methanopyrus kandleri AV19 and monophyly of archaeal methanogens.</title>
        <authorList>
            <person name="Slesarev A.I."/>
            <person name="Mezhevaya K.V."/>
            <person name="Makarova K.S."/>
            <person name="Polushin N.N."/>
            <person name="Shcherbinina O.V."/>
            <person name="Shakhova V.V."/>
            <person name="Belova G.I."/>
            <person name="Aravind L."/>
            <person name="Natale D.A."/>
            <person name="Rogozin I.B."/>
            <person name="Tatusov R.L."/>
            <person name="Wolf Y.I."/>
            <person name="Stetter K.O."/>
            <person name="Malykh A.G."/>
            <person name="Koonin E.V."/>
            <person name="Kozyavkin S.A."/>
        </authorList>
    </citation>
    <scope>NUCLEOTIDE SEQUENCE [LARGE SCALE GENOMIC DNA]</scope>
    <source>
        <strain>AV19 / DSM 6324 / JCM 9639 / NBRC 100938</strain>
    </source>
</reference>
<name>TRPC_METKA</name>
<keyword id="KW-0028">Amino-acid biosynthesis</keyword>
<keyword id="KW-0057">Aromatic amino acid biosynthesis</keyword>
<keyword id="KW-0210">Decarboxylase</keyword>
<keyword id="KW-0456">Lyase</keyword>
<keyword id="KW-1185">Reference proteome</keyword>
<keyword id="KW-0822">Tryptophan biosynthesis</keyword>
<feature type="chain" id="PRO_0000154293" description="Indole-3-glycerol phosphate synthase">
    <location>
        <begin position="1"/>
        <end position="254"/>
    </location>
</feature>
<sequence length="254" mass="27773">MDEILERVRERVEEIRDRTFTPRAGGRSLRKALSGPGVSVIAEVKPTSPSQGRLRDVDAEDVAERARAYERGGAAGISVLTEPEFFDGRPEYVEVVREAVDVPVLRKDFIIDPVQVEESAHYGADAVLIIAAAVGREAPELIDLAHEHGMEVLLEIDRWEHLELLSECDPDVVGVNNRDLRTLEVDLNRTLELGPEVKDLTNAPLVAESGVSGPEDVVLLGEVADAVLVGTYLMRAPDPSEAVRKLVEAGRSTE</sequence>
<accession>Q8TVJ8</accession>
<evidence type="ECO:0000255" key="1">
    <source>
        <dbReference type="HAMAP-Rule" id="MF_00134"/>
    </source>
</evidence>
<organism>
    <name type="scientific">Methanopyrus kandleri (strain AV19 / DSM 6324 / JCM 9639 / NBRC 100938)</name>
    <dbReference type="NCBI Taxonomy" id="190192"/>
    <lineage>
        <taxon>Archaea</taxon>
        <taxon>Methanobacteriati</taxon>
        <taxon>Methanobacteriota</taxon>
        <taxon>Methanomada group</taxon>
        <taxon>Methanopyri</taxon>
        <taxon>Methanopyrales</taxon>
        <taxon>Methanopyraceae</taxon>
        <taxon>Methanopyrus</taxon>
    </lineage>
</organism>
<comment type="catalytic activity">
    <reaction evidence="1">
        <text>1-(2-carboxyphenylamino)-1-deoxy-D-ribulose 5-phosphate + H(+) = (1S,2R)-1-C-(indol-3-yl)glycerol 3-phosphate + CO2 + H2O</text>
        <dbReference type="Rhea" id="RHEA:23476"/>
        <dbReference type="ChEBI" id="CHEBI:15377"/>
        <dbReference type="ChEBI" id="CHEBI:15378"/>
        <dbReference type="ChEBI" id="CHEBI:16526"/>
        <dbReference type="ChEBI" id="CHEBI:58613"/>
        <dbReference type="ChEBI" id="CHEBI:58866"/>
        <dbReference type="EC" id="4.1.1.48"/>
    </reaction>
</comment>
<comment type="pathway">
    <text evidence="1">Amino-acid biosynthesis; L-tryptophan biosynthesis; L-tryptophan from chorismate: step 4/5.</text>
</comment>
<comment type="similarity">
    <text evidence="1">Belongs to the TrpC family.</text>
</comment>
<gene>
    <name evidence="1" type="primary">trpC</name>
    <name type="ordered locus">MK1391</name>
</gene>
<protein>
    <recommendedName>
        <fullName evidence="1">Indole-3-glycerol phosphate synthase</fullName>
        <shortName evidence="1">IGPS</shortName>
        <ecNumber evidence="1">4.1.1.48</ecNumber>
    </recommendedName>
</protein>
<proteinExistence type="inferred from homology"/>